<comment type="similarity">
    <text evidence="2">Belongs to the polydnaviridae EGF-like motif protein family.</text>
</comment>
<dbReference type="EMBL" id="DQ000240">
    <property type="protein sequence ID" value="AAY24529.1"/>
    <property type="molecule type" value="Genomic_DNA"/>
</dbReference>
<dbReference type="KEGG" id="vg:3416072"/>
<dbReference type="Proteomes" id="UP000008168">
    <property type="component" value="Genome"/>
</dbReference>
<dbReference type="CDD" id="cd19941">
    <property type="entry name" value="TIL"/>
    <property type="match status" value="1"/>
</dbReference>
<dbReference type="Gene3D" id="2.10.25.10">
    <property type="entry name" value="Laminin"/>
    <property type="match status" value="1"/>
</dbReference>
<dbReference type="InterPro" id="IPR036084">
    <property type="entry name" value="Ser_inhib-like_sf"/>
</dbReference>
<dbReference type="InterPro" id="IPR002919">
    <property type="entry name" value="TIL_dom"/>
</dbReference>
<dbReference type="Pfam" id="PF01826">
    <property type="entry name" value="TIL"/>
    <property type="match status" value="1"/>
</dbReference>
<dbReference type="SUPFAM" id="SSF57567">
    <property type="entry name" value="Serine protease inhibitors"/>
    <property type="match status" value="1"/>
</dbReference>
<feature type="signal peptide" evidence="1">
    <location>
        <begin position="1"/>
        <end position="22"/>
    </location>
</feature>
<feature type="chain" id="PRO_0000405387" description="Probable protease inhibitor Egf0.4b">
    <location>
        <begin position="23"/>
        <end position="103"/>
    </location>
</feature>
<feature type="domain" description="TIL">
    <location>
        <begin position="35"/>
        <end position="87"/>
    </location>
</feature>
<gene>
    <name type="primary">O11</name>
</gene>
<name>EG04B_MDBVW</name>
<organism>
    <name type="scientific">Microplitis demolitor bracovirus (isolate Webb)</name>
    <name type="common">MdBV</name>
    <dbReference type="NCBI Taxonomy" id="654919"/>
    <lineage>
        <taxon>Viruses</taxon>
        <taxon>Viruses incertae sedis</taxon>
        <taxon>Polydnaviriformidae</taxon>
        <taxon>Bracoviriform</taxon>
        <taxon>Microplitis demolitor bracovirus</taxon>
    </lineage>
</organism>
<reference key="1">
    <citation type="journal article" date="2006" name="Virology">
        <title>Polydnavirus genomes reflect their dual roles as mutualists and pathogens.</title>
        <authorList>
            <person name="Webb B.A."/>
            <person name="Strand M.R."/>
            <person name="Dickey S.E."/>
            <person name="Beck M.H."/>
            <person name="Hilgarth R.S."/>
            <person name="Barney W.E."/>
            <person name="Kadash K."/>
            <person name="Kroemer J.A."/>
            <person name="Lindstrom K.G."/>
            <person name="Rattanadechakul W."/>
            <person name="Shelby K.S."/>
            <person name="Thoetkiattikul H."/>
            <person name="Turnbull M.W."/>
            <person name="Witherell R.A."/>
        </authorList>
    </citation>
    <scope>NUCLEOTIDE SEQUENCE [GENOMIC DNA]</scope>
</reference>
<protein>
    <recommendedName>
        <fullName>Probable protease inhibitor Egf0.4b</fullName>
    </recommendedName>
</protein>
<organismHost>
    <name type="scientific">Microplitis demolitor</name>
    <name type="common">Parasitoid wasp</name>
    <dbReference type="NCBI Taxonomy" id="69319"/>
</organismHost>
<keyword id="KW-1185">Reference proteome</keyword>
<keyword id="KW-0732">Signal</keyword>
<accession>Q4ZJY9</accession>
<sequence>MMSEKFALVLLVACIAFIGIETSPINSDSWKDGFCGENEAYDSMRRGCEERCDDHNPTFCFKFTTVCWCEKGYVRDKSDTCIKVEDCPNVSENLEFSETIIGM</sequence>
<proteinExistence type="inferred from homology"/>
<evidence type="ECO:0000255" key="1"/>
<evidence type="ECO:0000305" key="2"/>